<accession>Q1LLB1</accession>
<organism>
    <name type="scientific">Cupriavidus metallidurans (strain ATCC 43123 / DSM 2839 / NBRC 102507 / CH34)</name>
    <name type="common">Ralstonia metallidurans</name>
    <dbReference type="NCBI Taxonomy" id="266264"/>
    <lineage>
        <taxon>Bacteria</taxon>
        <taxon>Pseudomonadati</taxon>
        <taxon>Pseudomonadota</taxon>
        <taxon>Betaproteobacteria</taxon>
        <taxon>Burkholderiales</taxon>
        <taxon>Burkholderiaceae</taxon>
        <taxon>Cupriavidus</taxon>
    </lineage>
</organism>
<reference key="1">
    <citation type="journal article" date="2010" name="PLoS ONE">
        <title>The complete genome sequence of Cupriavidus metallidurans strain CH34, a master survivalist in harsh and anthropogenic environments.</title>
        <authorList>
            <person name="Janssen P.J."/>
            <person name="Van Houdt R."/>
            <person name="Moors H."/>
            <person name="Monsieurs P."/>
            <person name="Morin N."/>
            <person name="Michaux A."/>
            <person name="Benotmane M.A."/>
            <person name="Leys N."/>
            <person name="Vallaeys T."/>
            <person name="Lapidus A."/>
            <person name="Monchy S."/>
            <person name="Medigue C."/>
            <person name="Taghavi S."/>
            <person name="McCorkle S."/>
            <person name="Dunn J."/>
            <person name="van der Lelie D."/>
            <person name="Mergeay M."/>
        </authorList>
    </citation>
    <scope>NUCLEOTIDE SEQUENCE [LARGE SCALE GENOMIC DNA]</scope>
    <source>
        <strain>ATCC 43123 / DSM 2839 / NBRC 102507 / CH34</strain>
    </source>
</reference>
<sequence length="447" mass="48131">MTRKYFGTDGVRGRVGDAPITPDFVMRLGHAAGKVLALGQKTSQGKPTVLIGKDTRISGYMLEAALEAGFTAAGVNVLLTGPLPTPGIAYLTRTLRLAAGVVISASHNPYYDNGIKFFSASGDKLPDDVESQIEAMVEEPMTCVHSDELGRARRIDDAAGRYIEFCKSTFPYEHDLHGLKIVVDCANGAAYHIAPHVFHELGAEVISIGNQPNGRNINAGYGATAPEKLIEAVKANGADLGLAFDGDADRLQVVDADGRLYNGDELLYLIVRDRQASGQRVEGAVGTLMTNMAVELALKRLGVSFVRAKVGDRYVLEELNRHHWQLGGEGSGHLLCLDRHTTGDGIVSALQVLAALRRSGKTLPQLLDGVSLFPQTLINVRVEKGFDWQNHAGLKAVRDRVEPELEGRGRVLIRASGTEPVVRVMVEAEQVETAERAAQELAAALRA</sequence>
<proteinExistence type="inferred from homology"/>
<comment type="function">
    <text evidence="1">Catalyzes the conversion of glucosamine-6-phosphate to glucosamine-1-phosphate.</text>
</comment>
<comment type="catalytic activity">
    <reaction evidence="1">
        <text>alpha-D-glucosamine 1-phosphate = D-glucosamine 6-phosphate</text>
        <dbReference type="Rhea" id="RHEA:23424"/>
        <dbReference type="ChEBI" id="CHEBI:58516"/>
        <dbReference type="ChEBI" id="CHEBI:58725"/>
        <dbReference type="EC" id="5.4.2.10"/>
    </reaction>
</comment>
<comment type="cofactor">
    <cofactor evidence="1">
        <name>Mg(2+)</name>
        <dbReference type="ChEBI" id="CHEBI:18420"/>
    </cofactor>
    <text evidence="1">Binds 1 Mg(2+) ion per subunit.</text>
</comment>
<comment type="PTM">
    <text evidence="1">Activated by phosphorylation.</text>
</comment>
<comment type="similarity">
    <text evidence="1">Belongs to the phosphohexose mutase family.</text>
</comment>
<dbReference type="EC" id="5.4.2.10" evidence="1"/>
<dbReference type="EMBL" id="CP000352">
    <property type="protein sequence ID" value="ABF09065.1"/>
    <property type="molecule type" value="Genomic_DNA"/>
</dbReference>
<dbReference type="RefSeq" id="WP_011516893.1">
    <property type="nucleotide sequence ID" value="NC_007973.1"/>
</dbReference>
<dbReference type="SMR" id="Q1LLB1"/>
<dbReference type="STRING" id="266264.Rmet_2186"/>
<dbReference type="KEGG" id="rme:Rmet_2186"/>
<dbReference type="eggNOG" id="COG1109">
    <property type="taxonomic scope" value="Bacteria"/>
</dbReference>
<dbReference type="HOGENOM" id="CLU_016950_7_0_4"/>
<dbReference type="Proteomes" id="UP000002429">
    <property type="component" value="Chromosome"/>
</dbReference>
<dbReference type="GO" id="GO:0005829">
    <property type="term" value="C:cytosol"/>
    <property type="evidence" value="ECO:0007669"/>
    <property type="project" value="TreeGrafter"/>
</dbReference>
<dbReference type="GO" id="GO:0000287">
    <property type="term" value="F:magnesium ion binding"/>
    <property type="evidence" value="ECO:0007669"/>
    <property type="project" value="UniProtKB-UniRule"/>
</dbReference>
<dbReference type="GO" id="GO:0008966">
    <property type="term" value="F:phosphoglucosamine mutase activity"/>
    <property type="evidence" value="ECO:0007669"/>
    <property type="project" value="UniProtKB-UniRule"/>
</dbReference>
<dbReference type="GO" id="GO:0004615">
    <property type="term" value="F:phosphomannomutase activity"/>
    <property type="evidence" value="ECO:0007669"/>
    <property type="project" value="TreeGrafter"/>
</dbReference>
<dbReference type="GO" id="GO:0005975">
    <property type="term" value="P:carbohydrate metabolic process"/>
    <property type="evidence" value="ECO:0007669"/>
    <property type="project" value="InterPro"/>
</dbReference>
<dbReference type="GO" id="GO:0009252">
    <property type="term" value="P:peptidoglycan biosynthetic process"/>
    <property type="evidence" value="ECO:0007669"/>
    <property type="project" value="TreeGrafter"/>
</dbReference>
<dbReference type="GO" id="GO:0006048">
    <property type="term" value="P:UDP-N-acetylglucosamine biosynthetic process"/>
    <property type="evidence" value="ECO:0007669"/>
    <property type="project" value="TreeGrafter"/>
</dbReference>
<dbReference type="CDD" id="cd05802">
    <property type="entry name" value="GlmM"/>
    <property type="match status" value="1"/>
</dbReference>
<dbReference type="FunFam" id="3.30.310.50:FF:000001">
    <property type="entry name" value="Phosphoglucosamine mutase"/>
    <property type="match status" value="1"/>
</dbReference>
<dbReference type="FunFam" id="3.40.120.10:FF:000001">
    <property type="entry name" value="Phosphoglucosamine mutase"/>
    <property type="match status" value="1"/>
</dbReference>
<dbReference type="FunFam" id="3.40.120.10:FF:000003">
    <property type="entry name" value="Phosphoglucosamine mutase"/>
    <property type="match status" value="1"/>
</dbReference>
<dbReference type="Gene3D" id="3.40.120.10">
    <property type="entry name" value="Alpha-D-Glucose-1,6-Bisphosphate, subunit A, domain 3"/>
    <property type="match status" value="3"/>
</dbReference>
<dbReference type="Gene3D" id="3.30.310.50">
    <property type="entry name" value="Alpha-D-phosphohexomutase, C-terminal domain"/>
    <property type="match status" value="1"/>
</dbReference>
<dbReference type="HAMAP" id="MF_01554_B">
    <property type="entry name" value="GlmM_B"/>
    <property type="match status" value="1"/>
</dbReference>
<dbReference type="InterPro" id="IPR005844">
    <property type="entry name" value="A-D-PHexomutase_a/b/a-I"/>
</dbReference>
<dbReference type="InterPro" id="IPR016055">
    <property type="entry name" value="A-D-PHexomutase_a/b/a-I/II/III"/>
</dbReference>
<dbReference type="InterPro" id="IPR005845">
    <property type="entry name" value="A-D-PHexomutase_a/b/a-II"/>
</dbReference>
<dbReference type="InterPro" id="IPR005846">
    <property type="entry name" value="A-D-PHexomutase_a/b/a-III"/>
</dbReference>
<dbReference type="InterPro" id="IPR005843">
    <property type="entry name" value="A-D-PHexomutase_C"/>
</dbReference>
<dbReference type="InterPro" id="IPR036900">
    <property type="entry name" value="A-D-PHexomutase_C_sf"/>
</dbReference>
<dbReference type="InterPro" id="IPR016066">
    <property type="entry name" value="A-D-PHexomutase_CS"/>
</dbReference>
<dbReference type="InterPro" id="IPR005841">
    <property type="entry name" value="Alpha-D-phosphohexomutase_SF"/>
</dbReference>
<dbReference type="InterPro" id="IPR006352">
    <property type="entry name" value="GlmM_bact"/>
</dbReference>
<dbReference type="InterPro" id="IPR050060">
    <property type="entry name" value="Phosphoglucosamine_mutase"/>
</dbReference>
<dbReference type="NCBIfam" id="TIGR01455">
    <property type="entry name" value="glmM"/>
    <property type="match status" value="1"/>
</dbReference>
<dbReference type="NCBIfam" id="NF008139">
    <property type="entry name" value="PRK10887.1"/>
    <property type="match status" value="1"/>
</dbReference>
<dbReference type="PANTHER" id="PTHR42946:SF1">
    <property type="entry name" value="PHOSPHOGLUCOMUTASE (ALPHA-D-GLUCOSE-1,6-BISPHOSPHATE-DEPENDENT)"/>
    <property type="match status" value="1"/>
</dbReference>
<dbReference type="PANTHER" id="PTHR42946">
    <property type="entry name" value="PHOSPHOHEXOSE MUTASE"/>
    <property type="match status" value="1"/>
</dbReference>
<dbReference type="Pfam" id="PF02878">
    <property type="entry name" value="PGM_PMM_I"/>
    <property type="match status" value="1"/>
</dbReference>
<dbReference type="Pfam" id="PF02879">
    <property type="entry name" value="PGM_PMM_II"/>
    <property type="match status" value="1"/>
</dbReference>
<dbReference type="Pfam" id="PF02880">
    <property type="entry name" value="PGM_PMM_III"/>
    <property type="match status" value="1"/>
</dbReference>
<dbReference type="Pfam" id="PF00408">
    <property type="entry name" value="PGM_PMM_IV"/>
    <property type="match status" value="1"/>
</dbReference>
<dbReference type="PRINTS" id="PR00509">
    <property type="entry name" value="PGMPMM"/>
</dbReference>
<dbReference type="SUPFAM" id="SSF55957">
    <property type="entry name" value="Phosphoglucomutase, C-terminal domain"/>
    <property type="match status" value="1"/>
</dbReference>
<dbReference type="SUPFAM" id="SSF53738">
    <property type="entry name" value="Phosphoglucomutase, first 3 domains"/>
    <property type="match status" value="3"/>
</dbReference>
<dbReference type="PROSITE" id="PS00710">
    <property type="entry name" value="PGM_PMM"/>
    <property type="match status" value="1"/>
</dbReference>
<name>GLMM_CUPMC</name>
<evidence type="ECO:0000255" key="1">
    <source>
        <dbReference type="HAMAP-Rule" id="MF_01554"/>
    </source>
</evidence>
<gene>
    <name evidence="1" type="primary">glmM</name>
    <name type="ordered locus">Rmet_2186</name>
</gene>
<feature type="chain" id="PRO_0000301363" description="Phosphoglucosamine mutase">
    <location>
        <begin position="1"/>
        <end position="447"/>
    </location>
</feature>
<feature type="active site" description="Phosphoserine intermediate" evidence="1">
    <location>
        <position position="106"/>
    </location>
</feature>
<feature type="binding site" description="via phosphate group" evidence="1">
    <location>
        <position position="106"/>
    </location>
    <ligand>
        <name>Mg(2+)</name>
        <dbReference type="ChEBI" id="CHEBI:18420"/>
    </ligand>
</feature>
<feature type="binding site" evidence="1">
    <location>
        <position position="245"/>
    </location>
    <ligand>
        <name>Mg(2+)</name>
        <dbReference type="ChEBI" id="CHEBI:18420"/>
    </ligand>
</feature>
<feature type="binding site" evidence="1">
    <location>
        <position position="247"/>
    </location>
    <ligand>
        <name>Mg(2+)</name>
        <dbReference type="ChEBI" id="CHEBI:18420"/>
    </ligand>
</feature>
<feature type="binding site" evidence="1">
    <location>
        <position position="249"/>
    </location>
    <ligand>
        <name>Mg(2+)</name>
        <dbReference type="ChEBI" id="CHEBI:18420"/>
    </ligand>
</feature>
<feature type="modified residue" description="Phosphoserine" evidence="1">
    <location>
        <position position="106"/>
    </location>
</feature>
<protein>
    <recommendedName>
        <fullName evidence="1">Phosphoglucosamine mutase</fullName>
        <ecNumber evidence="1">5.4.2.10</ecNumber>
    </recommendedName>
</protein>
<keyword id="KW-0413">Isomerase</keyword>
<keyword id="KW-0460">Magnesium</keyword>
<keyword id="KW-0479">Metal-binding</keyword>
<keyword id="KW-0597">Phosphoprotein</keyword>
<keyword id="KW-1185">Reference proteome</keyword>